<proteinExistence type="inferred from homology"/>
<gene>
    <name evidence="1" type="primary">tpm</name>
    <name type="ordered locus">XCC1394</name>
</gene>
<dbReference type="EC" id="2.1.1.67" evidence="1"/>
<dbReference type="EMBL" id="AE008922">
    <property type="protein sequence ID" value="AAM40692.1"/>
    <property type="molecule type" value="Genomic_DNA"/>
</dbReference>
<dbReference type="RefSeq" id="NP_636768.1">
    <property type="nucleotide sequence ID" value="NC_003902.1"/>
</dbReference>
<dbReference type="RefSeq" id="WP_011036586.1">
    <property type="nucleotide sequence ID" value="NC_003902.1"/>
</dbReference>
<dbReference type="SMR" id="Q8PAT3"/>
<dbReference type="STRING" id="190485.XCC1394"/>
<dbReference type="EnsemblBacteria" id="AAM40692">
    <property type="protein sequence ID" value="AAM40692"/>
    <property type="gene ID" value="XCC1394"/>
</dbReference>
<dbReference type="KEGG" id="xcc:XCC1394"/>
<dbReference type="PATRIC" id="fig|190485.4.peg.1498"/>
<dbReference type="eggNOG" id="COG0500">
    <property type="taxonomic scope" value="Bacteria"/>
</dbReference>
<dbReference type="HOGENOM" id="CLU_085515_1_0_6"/>
<dbReference type="OrthoDB" id="9778208at2"/>
<dbReference type="Proteomes" id="UP000001010">
    <property type="component" value="Chromosome"/>
</dbReference>
<dbReference type="GO" id="GO:0005737">
    <property type="term" value="C:cytoplasm"/>
    <property type="evidence" value="ECO:0007669"/>
    <property type="project" value="UniProtKB-SubCell"/>
</dbReference>
<dbReference type="GO" id="GO:0008119">
    <property type="term" value="F:thiopurine S-methyltransferase activity"/>
    <property type="evidence" value="ECO:0000318"/>
    <property type="project" value="GO_Central"/>
</dbReference>
<dbReference type="GO" id="GO:0032259">
    <property type="term" value="P:methylation"/>
    <property type="evidence" value="ECO:0007669"/>
    <property type="project" value="UniProtKB-KW"/>
</dbReference>
<dbReference type="GO" id="GO:0010038">
    <property type="term" value="P:response to metal ion"/>
    <property type="evidence" value="ECO:0007669"/>
    <property type="project" value="InterPro"/>
</dbReference>
<dbReference type="FunFam" id="3.40.50.150:FF:000101">
    <property type="entry name" value="Thiopurine S-methyltransferase"/>
    <property type="match status" value="1"/>
</dbReference>
<dbReference type="Gene3D" id="3.40.50.150">
    <property type="entry name" value="Vaccinia Virus protein VP39"/>
    <property type="match status" value="1"/>
</dbReference>
<dbReference type="HAMAP" id="MF_00812">
    <property type="entry name" value="Thiopur_methtran"/>
    <property type="match status" value="1"/>
</dbReference>
<dbReference type="InterPro" id="IPR029063">
    <property type="entry name" value="SAM-dependent_MTases_sf"/>
</dbReference>
<dbReference type="InterPro" id="IPR022474">
    <property type="entry name" value="Thiopur_S-MeTfrase_Se/Te_detox"/>
</dbReference>
<dbReference type="InterPro" id="IPR025835">
    <property type="entry name" value="Thiopurine_S-MeTrfase"/>
</dbReference>
<dbReference type="InterPro" id="IPR008854">
    <property type="entry name" value="TPMT"/>
</dbReference>
<dbReference type="NCBIfam" id="NF009732">
    <property type="entry name" value="PRK13255.1"/>
    <property type="match status" value="1"/>
</dbReference>
<dbReference type="NCBIfam" id="TIGR03840">
    <property type="entry name" value="TMPT_Se_Te"/>
    <property type="match status" value="1"/>
</dbReference>
<dbReference type="PANTHER" id="PTHR10259">
    <property type="entry name" value="THIOPURINE S-METHYLTRANSFERASE"/>
    <property type="match status" value="1"/>
</dbReference>
<dbReference type="PANTHER" id="PTHR10259:SF11">
    <property type="entry name" value="THIOPURINE S-METHYLTRANSFERASE"/>
    <property type="match status" value="1"/>
</dbReference>
<dbReference type="Pfam" id="PF05724">
    <property type="entry name" value="TPMT"/>
    <property type="match status" value="1"/>
</dbReference>
<dbReference type="PIRSF" id="PIRSF023956">
    <property type="entry name" value="Thiopurine_S-methyltransferase"/>
    <property type="match status" value="1"/>
</dbReference>
<dbReference type="SUPFAM" id="SSF53335">
    <property type="entry name" value="S-adenosyl-L-methionine-dependent methyltransferases"/>
    <property type="match status" value="1"/>
</dbReference>
<dbReference type="PROSITE" id="PS51585">
    <property type="entry name" value="SAM_MT_TPMT"/>
    <property type="match status" value="1"/>
</dbReference>
<evidence type="ECO:0000255" key="1">
    <source>
        <dbReference type="HAMAP-Rule" id="MF_00812"/>
    </source>
</evidence>
<accession>Q8PAT3</accession>
<keyword id="KW-0963">Cytoplasm</keyword>
<keyword id="KW-0489">Methyltransferase</keyword>
<keyword id="KW-1185">Reference proteome</keyword>
<keyword id="KW-0949">S-adenosyl-L-methionine</keyword>
<keyword id="KW-0808">Transferase</keyword>
<comment type="catalytic activity">
    <reaction evidence="1">
        <text>S-adenosyl-L-methionine + a thiopurine = S-adenosyl-L-homocysteine + a thiopurine S-methylether.</text>
        <dbReference type="EC" id="2.1.1.67"/>
    </reaction>
</comment>
<comment type="subcellular location">
    <subcellularLocation>
        <location evidence="1">Cytoplasm</location>
    </subcellularLocation>
</comment>
<comment type="similarity">
    <text evidence="1">Belongs to the class I-like SAM-binding methyltransferase superfamily. TPMT family.</text>
</comment>
<name>TPMT_XANCP</name>
<reference key="1">
    <citation type="journal article" date="2002" name="Nature">
        <title>Comparison of the genomes of two Xanthomonas pathogens with differing host specificities.</title>
        <authorList>
            <person name="da Silva A.C.R."/>
            <person name="Ferro J.A."/>
            <person name="Reinach F.C."/>
            <person name="Farah C.S."/>
            <person name="Furlan L.R."/>
            <person name="Quaggio R.B."/>
            <person name="Monteiro-Vitorello C.B."/>
            <person name="Van Sluys M.A."/>
            <person name="Almeida N.F. Jr."/>
            <person name="Alves L.M.C."/>
            <person name="do Amaral A.M."/>
            <person name="Bertolini M.C."/>
            <person name="Camargo L.E.A."/>
            <person name="Camarotte G."/>
            <person name="Cannavan F."/>
            <person name="Cardozo J."/>
            <person name="Chambergo F."/>
            <person name="Ciapina L.P."/>
            <person name="Cicarelli R.M.B."/>
            <person name="Coutinho L.L."/>
            <person name="Cursino-Santos J.R."/>
            <person name="El-Dorry H."/>
            <person name="Faria J.B."/>
            <person name="Ferreira A.J.S."/>
            <person name="Ferreira R.C.C."/>
            <person name="Ferro M.I.T."/>
            <person name="Formighieri E.F."/>
            <person name="Franco M.C."/>
            <person name="Greggio C.C."/>
            <person name="Gruber A."/>
            <person name="Katsuyama A.M."/>
            <person name="Kishi L.T."/>
            <person name="Leite R.P."/>
            <person name="Lemos E.G.M."/>
            <person name="Lemos M.V.F."/>
            <person name="Locali E.C."/>
            <person name="Machado M.A."/>
            <person name="Madeira A.M.B.N."/>
            <person name="Martinez-Rossi N.M."/>
            <person name="Martins E.C."/>
            <person name="Meidanis J."/>
            <person name="Menck C.F.M."/>
            <person name="Miyaki C.Y."/>
            <person name="Moon D.H."/>
            <person name="Moreira L.M."/>
            <person name="Novo M.T.M."/>
            <person name="Okura V.K."/>
            <person name="Oliveira M.C."/>
            <person name="Oliveira V.R."/>
            <person name="Pereira H.A."/>
            <person name="Rossi A."/>
            <person name="Sena J.A.D."/>
            <person name="Silva C."/>
            <person name="de Souza R.F."/>
            <person name="Spinola L.A.F."/>
            <person name="Takita M.A."/>
            <person name="Tamura R.E."/>
            <person name="Teixeira E.C."/>
            <person name="Tezza R.I.D."/>
            <person name="Trindade dos Santos M."/>
            <person name="Truffi D."/>
            <person name="Tsai S.M."/>
            <person name="White F.F."/>
            <person name="Setubal J.C."/>
            <person name="Kitajima J.P."/>
        </authorList>
    </citation>
    <scope>NUCLEOTIDE SEQUENCE [LARGE SCALE GENOMIC DNA]</scope>
    <source>
        <strain>ATCC 33913 / DSM 3586 / NCPPB 528 / LMG 568 / P 25</strain>
    </source>
</reference>
<protein>
    <recommendedName>
        <fullName evidence="1">Thiopurine S-methyltransferase</fullName>
        <ecNumber evidence="1">2.1.1.67</ecNumber>
    </recommendedName>
    <alternativeName>
        <fullName evidence="1">Thiopurine methyltransferase</fullName>
    </alternativeName>
</protein>
<feature type="chain" id="PRO_0000220139" description="Thiopurine S-methyltransferase">
    <location>
        <begin position="1"/>
        <end position="218"/>
    </location>
</feature>
<feature type="binding site" evidence="1">
    <location>
        <position position="10"/>
    </location>
    <ligand>
        <name>S-adenosyl-L-methionine</name>
        <dbReference type="ChEBI" id="CHEBI:59789"/>
    </ligand>
</feature>
<feature type="binding site" evidence="1">
    <location>
        <position position="45"/>
    </location>
    <ligand>
        <name>S-adenosyl-L-methionine</name>
        <dbReference type="ChEBI" id="CHEBI:59789"/>
    </ligand>
</feature>
<feature type="binding site" evidence="1">
    <location>
        <position position="66"/>
    </location>
    <ligand>
        <name>S-adenosyl-L-methionine</name>
        <dbReference type="ChEBI" id="CHEBI:59789"/>
    </ligand>
</feature>
<feature type="binding site" evidence="1">
    <location>
        <position position="123"/>
    </location>
    <ligand>
        <name>S-adenosyl-L-methionine</name>
        <dbReference type="ChEBI" id="CHEBI:59789"/>
    </ligand>
</feature>
<organism>
    <name type="scientific">Xanthomonas campestris pv. campestris (strain ATCC 33913 / DSM 3586 / NCPPB 528 / LMG 568 / P 25)</name>
    <dbReference type="NCBI Taxonomy" id="190485"/>
    <lineage>
        <taxon>Bacteria</taxon>
        <taxon>Pseudomonadati</taxon>
        <taxon>Pseudomonadota</taxon>
        <taxon>Gammaproteobacteria</taxon>
        <taxon>Lysobacterales</taxon>
        <taxon>Lysobacteraceae</taxon>
        <taxon>Xanthomonas</taxon>
    </lineage>
</organism>
<sequence>MDTDFWLQRWQDGQTGFHQDEVMPLLQKHWPALQLPAHARVLVPLCGKTLDLHWLAAQGHRVLGVEISPLAVTQFFDDAGLQPQRHTSRAGEHCIAGPIEIICGDAFTLDASVLGDCTAVYDRAALVALPAALRQRYLETVYARLPAGCRGLLITLDYPQAEKAGPPFSVDAAEVHALFGTQWKVQELEHRDILDQEPRFRADGVTALSTGVYRLQRD</sequence>